<name>QUEG_YERPE</name>
<organism>
    <name type="scientific">Yersinia pestis</name>
    <dbReference type="NCBI Taxonomy" id="632"/>
    <lineage>
        <taxon>Bacteria</taxon>
        <taxon>Pseudomonadati</taxon>
        <taxon>Pseudomonadota</taxon>
        <taxon>Gammaproteobacteria</taxon>
        <taxon>Enterobacterales</taxon>
        <taxon>Yersiniaceae</taxon>
        <taxon>Yersinia</taxon>
    </lineage>
</organism>
<protein>
    <recommendedName>
        <fullName evidence="1">Epoxyqueuosine reductase</fullName>
        <ecNumber evidence="1">1.17.99.6</ecNumber>
    </recommendedName>
    <alternativeName>
        <fullName evidence="1">Queuosine biosynthesis protein QueG</fullName>
    </alternativeName>
</protein>
<feature type="chain" id="PRO_0000416090" description="Epoxyqueuosine reductase">
    <location>
        <begin position="1"/>
        <end position="411"/>
    </location>
</feature>
<feature type="domain" description="4Fe-4S ferredoxin-type" evidence="1">
    <location>
        <begin position="213"/>
        <end position="245"/>
    </location>
</feature>
<feature type="active site" description="Proton donor" evidence="1">
    <location>
        <position position="171"/>
    </location>
</feature>
<feature type="binding site" evidence="1">
    <location>
        <position position="225"/>
    </location>
    <ligand>
        <name>[4Fe-4S] cluster</name>
        <dbReference type="ChEBI" id="CHEBI:49883"/>
        <label>1</label>
    </ligand>
</feature>
<feature type="binding site" evidence="1">
    <location>
        <position position="228"/>
    </location>
    <ligand>
        <name>[4Fe-4S] cluster</name>
        <dbReference type="ChEBI" id="CHEBI:49883"/>
        <label>1</label>
    </ligand>
</feature>
<feature type="binding site" evidence="1">
    <location>
        <position position="231"/>
    </location>
    <ligand>
        <name>[4Fe-4S] cluster</name>
        <dbReference type="ChEBI" id="CHEBI:49883"/>
        <label>1</label>
    </ligand>
</feature>
<feature type="binding site" evidence="1">
    <location>
        <position position="235"/>
    </location>
    <ligand>
        <name>[4Fe-4S] cluster</name>
        <dbReference type="ChEBI" id="CHEBI:49883"/>
        <label>2</label>
    </ligand>
</feature>
<feature type="binding site" evidence="1">
    <location>
        <position position="251"/>
    </location>
    <ligand>
        <name>[4Fe-4S] cluster</name>
        <dbReference type="ChEBI" id="CHEBI:49883"/>
        <label>2</label>
    </ligand>
</feature>
<feature type="binding site" evidence="1">
    <location>
        <position position="278"/>
    </location>
    <ligand>
        <name>[4Fe-4S] cluster</name>
        <dbReference type="ChEBI" id="CHEBI:49883"/>
        <label>2</label>
    </ligand>
</feature>
<feature type="binding site" evidence="1">
    <location>
        <position position="281"/>
    </location>
    <ligand>
        <name>[4Fe-4S] cluster</name>
        <dbReference type="ChEBI" id="CHEBI:49883"/>
        <label>2</label>
    </ligand>
</feature>
<feature type="binding site" evidence="1">
    <location>
        <position position="285"/>
    </location>
    <ligand>
        <name>[4Fe-4S] cluster</name>
        <dbReference type="ChEBI" id="CHEBI:49883"/>
        <label>1</label>
    </ligand>
</feature>
<accession>Q7CKM4</accession>
<accession>Q74XB9</accession>
<gene>
    <name evidence="1" type="primary">queG</name>
    <name type="ordered locus">YPO0367</name>
    <name type="ordered locus">y0624</name>
    <name type="ordered locus">YP_0523</name>
</gene>
<comment type="function">
    <text evidence="1">Catalyzes the conversion of epoxyqueuosine (oQ) to queuosine (Q), which is a hypermodified base found in the wobble positions of tRNA(Asp), tRNA(Asn), tRNA(His) and tRNA(Tyr).</text>
</comment>
<comment type="catalytic activity">
    <reaction evidence="1">
        <text>epoxyqueuosine(34) in tRNA + AH2 = queuosine(34) in tRNA + A + H2O</text>
        <dbReference type="Rhea" id="RHEA:32159"/>
        <dbReference type="Rhea" id="RHEA-COMP:18571"/>
        <dbReference type="Rhea" id="RHEA-COMP:18582"/>
        <dbReference type="ChEBI" id="CHEBI:13193"/>
        <dbReference type="ChEBI" id="CHEBI:15377"/>
        <dbReference type="ChEBI" id="CHEBI:17499"/>
        <dbReference type="ChEBI" id="CHEBI:194431"/>
        <dbReference type="ChEBI" id="CHEBI:194443"/>
        <dbReference type="EC" id="1.17.99.6"/>
    </reaction>
</comment>
<comment type="cofactor">
    <cofactor evidence="1">
        <name>cob(II)alamin</name>
        <dbReference type="ChEBI" id="CHEBI:16304"/>
    </cofactor>
</comment>
<comment type="cofactor">
    <cofactor evidence="1">
        <name>[4Fe-4S] cluster</name>
        <dbReference type="ChEBI" id="CHEBI:49883"/>
    </cofactor>
    <text evidence="1">Binds 2 [4Fe-4S] clusters per monomer.</text>
</comment>
<comment type="pathway">
    <text evidence="1">tRNA modification; tRNA-queuosine biosynthesis.</text>
</comment>
<comment type="subunit">
    <text evidence="1">Monomer.</text>
</comment>
<comment type="subcellular location">
    <subcellularLocation>
        <location evidence="1">Cytoplasm</location>
    </subcellularLocation>
</comment>
<comment type="similarity">
    <text evidence="1">Belongs to the QueG family.</text>
</comment>
<reference key="1">
    <citation type="journal article" date="2001" name="Nature">
        <title>Genome sequence of Yersinia pestis, the causative agent of plague.</title>
        <authorList>
            <person name="Parkhill J."/>
            <person name="Wren B.W."/>
            <person name="Thomson N.R."/>
            <person name="Titball R.W."/>
            <person name="Holden M.T.G."/>
            <person name="Prentice M.B."/>
            <person name="Sebaihia M."/>
            <person name="James K.D."/>
            <person name="Churcher C.M."/>
            <person name="Mungall K.L."/>
            <person name="Baker S."/>
            <person name="Basham D."/>
            <person name="Bentley S.D."/>
            <person name="Brooks K."/>
            <person name="Cerdeno-Tarraga A.-M."/>
            <person name="Chillingworth T."/>
            <person name="Cronin A."/>
            <person name="Davies R.M."/>
            <person name="Davis P."/>
            <person name="Dougan G."/>
            <person name="Feltwell T."/>
            <person name="Hamlin N."/>
            <person name="Holroyd S."/>
            <person name="Jagels K."/>
            <person name="Karlyshev A.V."/>
            <person name="Leather S."/>
            <person name="Moule S."/>
            <person name="Oyston P.C.F."/>
            <person name="Quail M.A."/>
            <person name="Rutherford K.M."/>
            <person name="Simmonds M."/>
            <person name="Skelton J."/>
            <person name="Stevens K."/>
            <person name="Whitehead S."/>
            <person name="Barrell B.G."/>
        </authorList>
    </citation>
    <scope>NUCLEOTIDE SEQUENCE [LARGE SCALE GENOMIC DNA]</scope>
    <source>
        <strain>CO-92 / Biovar Orientalis</strain>
    </source>
</reference>
<reference key="2">
    <citation type="journal article" date="2002" name="J. Bacteriol.">
        <title>Genome sequence of Yersinia pestis KIM.</title>
        <authorList>
            <person name="Deng W."/>
            <person name="Burland V."/>
            <person name="Plunkett G. III"/>
            <person name="Boutin A."/>
            <person name="Mayhew G.F."/>
            <person name="Liss P."/>
            <person name="Perna N.T."/>
            <person name="Rose D.J."/>
            <person name="Mau B."/>
            <person name="Zhou S."/>
            <person name="Schwartz D.C."/>
            <person name="Fetherston J.D."/>
            <person name="Lindler L.E."/>
            <person name="Brubaker R.R."/>
            <person name="Plano G.V."/>
            <person name="Straley S.C."/>
            <person name="McDonough K.A."/>
            <person name="Nilles M.L."/>
            <person name="Matson J.S."/>
            <person name="Blattner F.R."/>
            <person name="Perry R.D."/>
        </authorList>
    </citation>
    <scope>NUCLEOTIDE SEQUENCE [LARGE SCALE GENOMIC DNA]</scope>
    <source>
        <strain>KIM10+ / Biovar Mediaevalis</strain>
    </source>
</reference>
<reference key="3">
    <citation type="journal article" date="2004" name="DNA Res.">
        <title>Complete genome sequence of Yersinia pestis strain 91001, an isolate avirulent to humans.</title>
        <authorList>
            <person name="Song Y."/>
            <person name="Tong Z."/>
            <person name="Wang J."/>
            <person name="Wang L."/>
            <person name="Guo Z."/>
            <person name="Han Y."/>
            <person name="Zhang J."/>
            <person name="Pei D."/>
            <person name="Zhou D."/>
            <person name="Qin H."/>
            <person name="Pang X."/>
            <person name="Han Y."/>
            <person name="Zhai J."/>
            <person name="Li M."/>
            <person name="Cui B."/>
            <person name="Qi Z."/>
            <person name="Jin L."/>
            <person name="Dai R."/>
            <person name="Chen F."/>
            <person name="Li S."/>
            <person name="Ye C."/>
            <person name="Du Z."/>
            <person name="Lin W."/>
            <person name="Wang J."/>
            <person name="Yu J."/>
            <person name="Yang H."/>
            <person name="Wang J."/>
            <person name="Huang P."/>
            <person name="Yang R."/>
        </authorList>
    </citation>
    <scope>NUCLEOTIDE SEQUENCE [LARGE SCALE GENOMIC DNA]</scope>
    <source>
        <strain>91001 / Biovar Mediaevalis</strain>
    </source>
</reference>
<evidence type="ECO:0000255" key="1">
    <source>
        <dbReference type="HAMAP-Rule" id="MF_00916"/>
    </source>
</evidence>
<keyword id="KW-0004">4Fe-4S</keyword>
<keyword id="KW-0963">Cytoplasm</keyword>
<keyword id="KW-0408">Iron</keyword>
<keyword id="KW-0411">Iron-sulfur</keyword>
<keyword id="KW-0479">Metal-binding</keyword>
<keyword id="KW-0560">Oxidoreductase</keyword>
<keyword id="KW-0671">Queuosine biosynthesis</keyword>
<keyword id="KW-1185">Reference proteome</keyword>
<keyword id="KW-0819">tRNA processing</keyword>
<sequence>MAHPLDLNQLAQHIKQWGQSLGFQQVGICDTDLTAEEPRLQAWLDKQYHGEMAWMARHGMLRARPHELLPGTLRVISVRMNYLPAKAAFASTLNNPELGYVSRYALGRDYHKLLRQRLKKLGDQIQHYCLEQNNLDRHDLELHDLEQHDSERQGQPEQHTASEINFRPFVDSAPIMERSLAAKAGIGWVGKHSLILNRDAGSWFFLGELLIDLPLPVDKPQEEQCGRCVACMTTCPTGAIVAPYTVDARRCISYLTIELEGAIPEEFRPLMGNRIYGCDDCQLICPWNRFSQLTDEDDFSPRAVLHTPQLLDLFAWNEEKFLRVTEGSAIRRIGHLRWLRNISVALGNAPYLDSIVLALETRRGLHPMLDEHIEWAISQQLARRATQAVEVQLPQKKRLIRAIEKGLPRDA</sequence>
<dbReference type="EC" id="1.17.99.6" evidence="1"/>
<dbReference type="EMBL" id="AL590842">
    <property type="protein sequence ID" value="CAL19049.1"/>
    <property type="molecule type" value="Genomic_DNA"/>
</dbReference>
<dbReference type="EMBL" id="AE009952">
    <property type="protein sequence ID" value="AAM84212.1"/>
    <property type="molecule type" value="Genomic_DNA"/>
</dbReference>
<dbReference type="EMBL" id="AE017042">
    <property type="protein sequence ID" value="AAS60793.1"/>
    <property type="molecule type" value="Genomic_DNA"/>
</dbReference>
<dbReference type="PIR" id="AG0045">
    <property type="entry name" value="AG0045"/>
</dbReference>
<dbReference type="RefSeq" id="WP_002209144.1">
    <property type="nucleotide sequence ID" value="NZ_WUCM01000083.1"/>
</dbReference>
<dbReference type="RefSeq" id="YP_002345445.1">
    <property type="nucleotide sequence ID" value="NC_003143.1"/>
</dbReference>
<dbReference type="SMR" id="Q7CKM4"/>
<dbReference type="STRING" id="214092.YPO0367"/>
<dbReference type="PaxDb" id="214092-YPO0367"/>
<dbReference type="DNASU" id="1145571"/>
<dbReference type="EnsemblBacteria" id="AAS60793">
    <property type="protein sequence ID" value="AAS60793"/>
    <property type="gene ID" value="YP_0523"/>
</dbReference>
<dbReference type="GeneID" id="57974240"/>
<dbReference type="KEGG" id="ype:YPO0367"/>
<dbReference type="KEGG" id="ypk:y0624"/>
<dbReference type="KEGG" id="ypm:YP_0523"/>
<dbReference type="PATRIC" id="fig|1028802.3.peg.168"/>
<dbReference type="eggNOG" id="COG1600">
    <property type="taxonomic scope" value="Bacteria"/>
</dbReference>
<dbReference type="HOGENOM" id="CLU_030790_0_1_6"/>
<dbReference type="OMA" id="FPAPYQL"/>
<dbReference type="OrthoDB" id="9784571at2"/>
<dbReference type="UniPathway" id="UPA00392"/>
<dbReference type="Proteomes" id="UP000000815">
    <property type="component" value="Chromosome"/>
</dbReference>
<dbReference type="Proteomes" id="UP000001019">
    <property type="component" value="Chromosome"/>
</dbReference>
<dbReference type="Proteomes" id="UP000002490">
    <property type="component" value="Chromosome"/>
</dbReference>
<dbReference type="GO" id="GO:0005737">
    <property type="term" value="C:cytoplasm"/>
    <property type="evidence" value="ECO:0007669"/>
    <property type="project" value="UniProtKB-SubCell"/>
</dbReference>
<dbReference type="GO" id="GO:0051539">
    <property type="term" value="F:4 iron, 4 sulfur cluster binding"/>
    <property type="evidence" value="ECO:0007669"/>
    <property type="project" value="UniProtKB-KW"/>
</dbReference>
<dbReference type="GO" id="GO:0052693">
    <property type="term" value="F:epoxyqueuosine reductase activity"/>
    <property type="evidence" value="ECO:0000318"/>
    <property type="project" value="GO_Central"/>
</dbReference>
<dbReference type="GO" id="GO:0046872">
    <property type="term" value="F:metal ion binding"/>
    <property type="evidence" value="ECO:0007669"/>
    <property type="project" value="UniProtKB-KW"/>
</dbReference>
<dbReference type="GO" id="GO:0008616">
    <property type="term" value="P:queuosine biosynthetic process"/>
    <property type="evidence" value="ECO:0000318"/>
    <property type="project" value="GO_Central"/>
</dbReference>
<dbReference type="GO" id="GO:0006400">
    <property type="term" value="P:tRNA modification"/>
    <property type="evidence" value="ECO:0007669"/>
    <property type="project" value="UniProtKB-UniRule"/>
</dbReference>
<dbReference type="FunFam" id="3.30.70.20:FF:000017">
    <property type="entry name" value="Epoxyqueuosine reductase"/>
    <property type="match status" value="1"/>
</dbReference>
<dbReference type="Gene3D" id="3.30.70.20">
    <property type="match status" value="1"/>
</dbReference>
<dbReference type="HAMAP" id="MF_00916">
    <property type="entry name" value="QueG"/>
    <property type="match status" value="1"/>
</dbReference>
<dbReference type="InterPro" id="IPR017896">
    <property type="entry name" value="4Fe4S_Fe-S-bd"/>
</dbReference>
<dbReference type="InterPro" id="IPR017900">
    <property type="entry name" value="4Fe4S_Fe_S_CS"/>
</dbReference>
<dbReference type="InterPro" id="IPR004453">
    <property type="entry name" value="QueG"/>
</dbReference>
<dbReference type="InterPro" id="IPR013542">
    <property type="entry name" value="QueG_DUF1730"/>
</dbReference>
<dbReference type="NCBIfam" id="TIGR00276">
    <property type="entry name" value="tRNA epoxyqueuosine(34) reductase QueG"/>
    <property type="match status" value="1"/>
</dbReference>
<dbReference type="PANTHER" id="PTHR30002">
    <property type="entry name" value="EPOXYQUEUOSINE REDUCTASE"/>
    <property type="match status" value="1"/>
</dbReference>
<dbReference type="PANTHER" id="PTHR30002:SF4">
    <property type="entry name" value="EPOXYQUEUOSINE REDUCTASE"/>
    <property type="match status" value="1"/>
</dbReference>
<dbReference type="Pfam" id="PF13484">
    <property type="entry name" value="Fer4_16"/>
    <property type="match status" value="1"/>
</dbReference>
<dbReference type="Pfam" id="PF08331">
    <property type="entry name" value="QueG_DUF1730"/>
    <property type="match status" value="1"/>
</dbReference>
<dbReference type="SUPFAM" id="SSF46548">
    <property type="entry name" value="alpha-helical ferredoxin"/>
    <property type="match status" value="1"/>
</dbReference>
<dbReference type="PROSITE" id="PS00198">
    <property type="entry name" value="4FE4S_FER_1"/>
    <property type="match status" value="1"/>
</dbReference>
<dbReference type="PROSITE" id="PS51379">
    <property type="entry name" value="4FE4S_FER_2"/>
    <property type="match status" value="1"/>
</dbReference>
<proteinExistence type="inferred from homology"/>